<reference key="1">
    <citation type="journal article" date="2006" name="Mol. Microbiol.">
        <title>Role of pathogenicity island-associated integrases in the genome plasticity of uropathogenic Escherichia coli strain 536.</title>
        <authorList>
            <person name="Hochhut B."/>
            <person name="Wilde C."/>
            <person name="Balling G."/>
            <person name="Middendorf B."/>
            <person name="Dobrindt U."/>
            <person name="Brzuszkiewicz E."/>
            <person name="Gottschalk G."/>
            <person name="Carniel E."/>
            <person name="Hacker J."/>
        </authorList>
    </citation>
    <scope>NUCLEOTIDE SEQUENCE [LARGE SCALE GENOMIC DNA]</scope>
    <source>
        <strain>536 / UPEC</strain>
    </source>
</reference>
<gene>
    <name evidence="1" type="primary">ymgG</name>
    <name type="ordered locus">ECP_1211</name>
</gene>
<proteinExistence type="inferred from homology"/>
<comment type="similarity">
    <text evidence="1">Belongs to the UPF0757 family.</text>
</comment>
<comment type="sequence caution" evidence="2">
    <conflict type="erroneous initiation">
        <sequence resource="EMBL-CDS" id="ABG69222"/>
    </conflict>
</comment>
<sequence length="114" mass="10807">MKKKILAFGLISALFCSTPAMADMNRTTKGALLGAGVGLLTGNGVNGVLKGAAVGAGVGAVTEKGRDGKNARKGAKVGAAVGAVTGVLTGNGLEGAIKGAVIGGTGGAILGKMK</sequence>
<name>YMGG_ECOL5</name>
<dbReference type="EMBL" id="CP000247">
    <property type="protein sequence ID" value="ABG69222.1"/>
    <property type="status" value="ALT_INIT"/>
    <property type="molecule type" value="Genomic_DNA"/>
</dbReference>
<dbReference type="RefSeq" id="WP_000726974.1">
    <property type="nucleotide sequence ID" value="NC_008253.1"/>
</dbReference>
<dbReference type="KEGG" id="ecp:ECP_1211"/>
<dbReference type="HOGENOM" id="CLU_164687_0_0_6"/>
<dbReference type="Proteomes" id="UP000009182">
    <property type="component" value="Chromosome"/>
</dbReference>
<dbReference type="HAMAP" id="MF_01455">
    <property type="entry name" value="UPF0757"/>
    <property type="match status" value="1"/>
</dbReference>
<dbReference type="InterPro" id="IPR025693">
    <property type="entry name" value="Gly-zipper_OmpA-like_dom"/>
</dbReference>
<dbReference type="InterPro" id="IPR027367">
    <property type="entry name" value="Gly-zipper_YMGG"/>
</dbReference>
<dbReference type="InterPro" id="IPR022833">
    <property type="entry name" value="UPF0757_YmgG"/>
</dbReference>
<dbReference type="Pfam" id="PF13436">
    <property type="entry name" value="Gly-zipper_OmpA"/>
    <property type="match status" value="1"/>
</dbReference>
<dbReference type="Pfam" id="PF13441">
    <property type="entry name" value="Gly-zipper_YMGG"/>
    <property type="match status" value="1"/>
</dbReference>
<organism>
    <name type="scientific">Escherichia coli O6:K15:H31 (strain 536 / UPEC)</name>
    <dbReference type="NCBI Taxonomy" id="362663"/>
    <lineage>
        <taxon>Bacteria</taxon>
        <taxon>Pseudomonadati</taxon>
        <taxon>Pseudomonadota</taxon>
        <taxon>Gammaproteobacteria</taxon>
        <taxon>Enterobacterales</taxon>
        <taxon>Enterobacteriaceae</taxon>
        <taxon>Escherichia</taxon>
    </lineage>
</organism>
<feature type="chain" id="PRO_0000252221" description="UPF0757 protein YmgG">
    <location>
        <begin position="1"/>
        <end position="114"/>
    </location>
</feature>
<accession>Q0TIK7</accession>
<protein>
    <recommendedName>
        <fullName evidence="1">UPF0757 protein YmgG</fullName>
    </recommendedName>
</protein>
<evidence type="ECO:0000255" key="1">
    <source>
        <dbReference type="HAMAP-Rule" id="MF_01455"/>
    </source>
</evidence>
<evidence type="ECO:0000305" key="2"/>